<dbReference type="EC" id="6.3.2.6" evidence="1"/>
<dbReference type="EMBL" id="FM177140">
    <property type="protein sequence ID" value="CAQ67051.1"/>
    <property type="molecule type" value="Genomic_DNA"/>
</dbReference>
<dbReference type="SMR" id="B3WFA0"/>
<dbReference type="KEGG" id="lcb:LCABL_19730"/>
<dbReference type="HOGENOM" id="CLU_061495_2_0_9"/>
<dbReference type="UniPathway" id="UPA00074">
    <property type="reaction ID" value="UER00131"/>
</dbReference>
<dbReference type="GO" id="GO:0005524">
    <property type="term" value="F:ATP binding"/>
    <property type="evidence" value="ECO:0007669"/>
    <property type="project" value="UniProtKB-KW"/>
</dbReference>
<dbReference type="GO" id="GO:0004639">
    <property type="term" value="F:phosphoribosylaminoimidazolesuccinocarboxamide synthase activity"/>
    <property type="evidence" value="ECO:0007669"/>
    <property type="project" value="UniProtKB-UniRule"/>
</dbReference>
<dbReference type="GO" id="GO:0006189">
    <property type="term" value="P:'de novo' IMP biosynthetic process"/>
    <property type="evidence" value="ECO:0007669"/>
    <property type="project" value="UniProtKB-UniRule"/>
</dbReference>
<dbReference type="GO" id="GO:0009236">
    <property type="term" value="P:cobalamin biosynthetic process"/>
    <property type="evidence" value="ECO:0007669"/>
    <property type="project" value="InterPro"/>
</dbReference>
<dbReference type="CDD" id="cd01415">
    <property type="entry name" value="SAICAR_synt_PurC"/>
    <property type="match status" value="1"/>
</dbReference>
<dbReference type="Gene3D" id="3.30.470.20">
    <property type="entry name" value="ATP-grasp fold, B domain"/>
    <property type="match status" value="1"/>
</dbReference>
<dbReference type="Gene3D" id="3.30.200.20">
    <property type="entry name" value="Phosphorylase Kinase, domain 1"/>
    <property type="match status" value="1"/>
</dbReference>
<dbReference type="HAMAP" id="MF_00137">
    <property type="entry name" value="SAICAR_synth"/>
    <property type="match status" value="1"/>
</dbReference>
<dbReference type="InterPro" id="IPR028923">
    <property type="entry name" value="SAICAR_synt/ADE2_N"/>
</dbReference>
<dbReference type="InterPro" id="IPR033934">
    <property type="entry name" value="SAICAR_synt_PurC"/>
</dbReference>
<dbReference type="InterPro" id="IPR001636">
    <property type="entry name" value="SAICAR_synth"/>
</dbReference>
<dbReference type="InterPro" id="IPR050089">
    <property type="entry name" value="SAICAR_synthetase"/>
</dbReference>
<dbReference type="NCBIfam" id="TIGR00081">
    <property type="entry name" value="purC"/>
    <property type="match status" value="1"/>
</dbReference>
<dbReference type="PANTHER" id="PTHR43599">
    <property type="entry name" value="MULTIFUNCTIONAL PROTEIN ADE2"/>
    <property type="match status" value="1"/>
</dbReference>
<dbReference type="PANTHER" id="PTHR43599:SF3">
    <property type="entry name" value="SI:DKEY-6E2.2"/>
    <property type="match status" value="1"/>
</dbReference>
<dbReference type="Pfam" id="PF01259">
    <property type="entry name" value="SAICAR_synt"/>
    <property type="match status" value="1"/>
</dbReference>
<dbReference type="SUPFAM" id="SSF56104">
    <property type="entry name" value="SAICAR synthase-like"/>
    <property type="match status" value="1"/>
</dbReference>
<feature type="chain" id="PRO_1000095990" description="Phosphoribosylaminoimidazole-succinocarboxamide synthase">
    <location>
        <begin position="1"/>
        <end position="241"/>
    </location>
</feature>
<organism>
    <name type="scientific">Lacticaseibacillus casei (strain BL23)</name>
    <name type="common">Lactobacillus casei</name>
    <dbReference type="NCBI Taxonomy" id="543734"/>
    <lineage>
        <taxon>Bacteria</taxon>
        <taxon>Bacillati</taxon>
        <taxon>Bacillota</taxon>
        <taxon>Bacilli</taxon>
        <taxon>Lactobacillales</taxon>
        <taxon>Lactobacillaceae</taxon>
        <taxon>Lacticaseibacillus</taxon>
    </lineage>
</organism>
<name>PUR7_LACCB</name>
<comment type="catalytic activity">
    <reaction evidence="1">
        <text>5-amino-1-(5-phospho-D-ribosyl)imidazole-4-carboxylate + L-aspartate + ATP = (2S)-2-[5-amino-1-(5-phospho-beta-D-ribosyl)imidazole-4-carboxamido]succinate + ADP + phosphate + 2 H(+)</text>
        <dbReference type="Rhea" id="RHEA:22628"/>
        <dbReference type="ChEBI" id="CHEBI:15378"/>
        <dbReference type="ChEBI" id="CHEBI:29991"/>
        <dbReference type="ChEBI" id="CHEBI:30616"/>
        <dbReference type="ChEBI" id="CHEBI:43474"/>
        <dbReference type="ChEBI" id="CHEBI:58443"/>
        <dbReference type="ChEBI" id="CHEBI:77657"/>
        <dbReference type="ChEBI" id="CHEBI:456216"/>
        <dbReference type="EC" id="6.3.2.6"/>
    </reaction>
</comment>
<comment type="pathway">
    <text evidence="1">Purine metabolism; IMP biosynthesis via de novo pathway; 5-amino-1-(5-phospho-D-ribosyl)imidazole-4-carboxamide from 5-amino-1-(5-phospho-D-ribosyl)imidazole-4-carboxylate: step 1/2.</text>
</comment>
<comment type="similarity">
    <text evidence="1">Belongs to the SAICAR synthetase family.</text>
</comment>
<gene>
    <name evidence="1" type="primary">purC</name>
    <name type="ordered locus">LCABL_19730</name>
</gene>
<keyword id="KW-0067">ATP-binding</keyword>
<keyword id="KW-0436">Ligase</keyword>
<keyword id="KW-0547">Nucleotide-binding</keyword>
<keyword id="KW-0658">Purine biosynthesis</keyword>
<evidence type="ECO:0000255" key="1">
    <source>
        <dbReference type="HAMAP-Rule" id="MF_00137"/>
    </source>
</evidence>
<accession>B3WFA0</accession>
<reference key="1">
    <citation type="submission" date="2008-06" db="EMBL/GenBank/DDBJ databases">
        <title>Lactobacillus casei BL23 complete genome sequence.</title>
        <authorList>
            <person name="Maze A."/>
            <person name="Boel G."/>
            <person name="Bourand A."/>
            <person name="Loux V."/>
            <person name="Gibrat J.F."/>
            <person name="Zuniga M."/>
            <person name="Hartke A."/>
            <person name="Deutscher J."/>
        </authorList>
    </citation>
    <scope>NUCLEOTIDE SEQUENCE [LARGE SCALE GENOMIC DNA]</scope>
    <source>
        <strain>BL23</strain>
    </source>
</reference>
<sequence length="241" mass="27113">MNKTTLLYTGKAKQVYATDDPDVLWMAYTNQATALNGEKKAQIAHKGELNRAISTLLFKELTAVGIPTHYLDSPDSTTMIVKKAAMLPLEVVVRNYASGHFVTKFNVKPMMKLDPPIHEYYYKSDELGDPFMNEAQIFALHEATPEQLKQVRALTDRINTYLMQRFAAIGITLVDFKLEYGTLKDGTLVLADELSPDNFRLVDQQTGASLDKDVFRQNRGPLTPVYEEVLSRLQEKGAAHV</sequence>
<protein>
    <recommendedName>
        <fullName evidence="1">Phosphoribosylaminoimidazole-succinocarboxamide synthase</fullName>
        <ecNumber evidence="1">6.3.2.6</ecNumber>
    </recommendedName>
    <alternativeName>
        <fullName evidence="1">SAICAR synthetase</fullName>
    </alternativeName>
</protein>
<proteinExistence type="inferred from homology"/>